<comment type="function">
    <text evidence="2">Cell wall formation.</text>
</comment>
<comment type="catalytic activity">
    <reaction evidence="2">
        <text>2 D-alanine + ATP = D-alanyl-D-alanine + ADP + phosphate + H(+)</text>
        <dbReference type="Rhea" id="RHEA:11224"/>
        <dbReference type="ChEBI" id="CHEBI:15378"/>
        <dbReference type="ChEBI" id="CHEBI:30616"/>
        <dbReference type="ChEBI" id="CHEBI:43474"/>
        <dbReference type="ChEBI" id="CHEBI:57416"/>
        <dbReference type="ChEBI" id="CHEBI:57822"/>
        <dbReference type="ChEBI" id="CHEBI:456216"/>
        <dbReference type="EC" id="6.3.2.4"/>
    </reaction>
</comment>
<comment type="cofactor">
    <cofactor evidence="1">
        <name>Mg(2+)</name>
        <dbReference type="ChEBI" id="CHEBI:18420"/>
    </cofactor>
    <cofactor evidence="1">
        <name>Mn(2+)</name>
        <dbReference type="ChEBI" id="CHEBI:29035"/>
    </cofactor>
    <text evidence="1">Binds 2 magnesium or manganese ions per subunit.</text>
</comment>
<comment type="pathway">
    <text evidence="2">Cell wall biogenesis; peptidoglycan biosynthesis.</text>
</comment>
<comment type="subcellular location">
    <subcellularLocation>
        <location evidence="2">Cytoplasm</location>
    </subcellularLocation>
</comment>
<comment type="similarity">
    <text evidence="2">Belongs to the D-alanine--D-alanine ligase family.</text>
</comment>
<proteinExistence type="inferred from homology"/>
<keyword id="KW-0067">ATP-binding</keyword>
<keyword id="KW-0133">Cell shape</keyword>
<keyword id="KW-0961">Cell wall biogenesis/degradation</keyword>
<keyword id="KW-0963">Cytoplasm</keyword>
<keyword id="KW-0436">Ligase</keyword>
<keyword id="KW-0460">Magnesium</keyword>
<keyword id="KW-0464">Manganese</keyword>
<keyword id="KW-0479">Metal-binding</keyword>
<keyword id="KW-0547">Nucleotide-binding</keyword>
<keyword id="KW-0573">Peptidoglycan synthesis</keyword>
<name>DDL_BURVG</name>
<organism>
    <name type="scientific">Burkholderia vietnamiensis (strain G4 / LMG 22486)</name>
    <name type="common">Burkholderia cepacia (strain R1808)</name>
    <dbReference type="NCBI Taxonomy" id="269482"/>
    <lineage>
        <taxon>Bacteria</taxon>
        <taxon>Pseudomonadati</taxon>
        <taxon>Pseudomonadota</taxon>
        <taxon>Betaproteobacteria</taxon>
        <taxon>Burkholderiales</taxon>
        <taxon>Burkholderiaceae</taxon>
        <taxon>Burkholderia</taxon>
        <taxon>Burkholderia cepacia complex</taxon>
    </lineage>
</organism>
<reference key="1">
    <citation type="submission" date="2007-03" db="EMBL/GenBank/DDBJ databases">
        <title>Complete sequence of chromosome 1 of Burkholderia vietnamiensis G4.</title>
        <authorList>
            <consortium name="US DOE Joint Genome Institute"/>
            <person name="Copeland A."/>
            <person name="Lucas S."/>
            <person name="Lapidus A."/>
            <person name="Barry K."/>
            <person name="Detter J.C."/>
            <person name="Glavina del Rio T."/>
            <person name="Hammon N."/>
            <person name="Israni S."/>
            <person name="Dalin E."/>
            <person name="Tice H."/>
            <person name="Pitluck S."/>
            <person name="Chain P."/>
            <person name="Malfatti S."/>
            <person name="Shin M."/>
            <person name="Vergez L."/>
            <person name="Schmutz J."/>
            <person name="Larimer F."/>
            <person name="Land M."/>
            <person name="Hauser L."/>
            <person name="Kyrpides N."/>
            <person name="Tiedje J."/>
            <person name="Richardson P."/>
        </authorList>
    </citation>
    <scope>NUCLEOTIDE SEQUENCE [LARGE SCALE GENOMIC DNA]</scope>
    <source>
        <strain>G4 / LMG 22486</strain>
    </source>
</reference>
<feature type="chain" id="PRO_0000341079" description="D-alanine--D-alanine ligase">
    <location>
        <begin position="1"/>
        <end position="313"/>
    </location>
</feature>
<feature type="domain" description="ATP-grasp" evidence="2">
    <location>
        <begin position="108"/>
        <end position="308"/>
    </location>
</feature>
<feature type="binding site" evidence="2">
    <location>
        <begin position="138"/>
        <end position="193"/>
    </location>
    <ligand>
        <name>ATP</name>
        <dbReference type="ChEBI" id="CHEBI:30616"/>
    </ligand>
</feature>
<feature type="binding site" evidence="2">
    <location>
        <position position="262"/>
    </location>
    <ligand>
        <name>Mg(2+)</name>
        <dbReference type="ChEBI" id="CHEBI:18420"/>
        <label>1</label>
    </ligand>
</feature>
<feature type="binding site" evidence="2">
    <location>
        <position position="275"/>
    </location>
    <ligand>
        <name>Mg(2+)</name>
        <dbReference type="ChEBI" id="CHEBI:18420"/>
        <label>1</label>
    </ligand>
</feature>
<feature type="binding site" evidence="2">
    <location>
        <position position="275"/>
    </location>
    <ligand>
        <name>Mg(2+)</name>
        <dbReference type="ChEBI" id="CHEBI:18420"/>
        <label>2</label>
    </ligand>
</feature>
<feature type="binding site" evidence="2">
    <location>
        <position position="277"/>
    </location>
    <ligand>
        <name>Mg(2+)</name>
        <dbReference type="ChEBI" id="CHEBI:18420"/>
        <label>2</label>
    </ligand>
</feature>
<sequence>MSGIDPKRFGKVAVLFGGESAEREVSLTSGRLVLQGLRDAGIDAHLFDPAERPLSALKDEGFVRAFNALHGGYGENGQIQGALDFYGIRYTGSGVLGSALGLDKFRTKLVWQQTGVPTPPFETVLRGDDYAARATEIVAKLGLPLFVKPASEGSSVAVLKVKTADALPAALSEAATHDKIVIVEKSIEGGGEYTACIAGDLDLPLIKIVPAGEFYDYHAKYVADDTQYLIPCGLPAAQEAELKRIARRAFDVLGCTDWGRADFMLDAAGNAYFLEVNTAPGMTDHSLPPKAARSIGISYSELVVKVLSLTLND</sequence>
<protein>
    <recommendedName>
        <fullName evidence="2">D-alanine--D-alanine ligase</fullName>
        <ecNumber evidence="2">6.3.2.4</ecNumber>
    </recommendedName>
    <alternativeName>
        <fullName evidence="2">D-Ala-D-Ala ligase</fullName>
    </alternativeName>
    <alternativeName>
        <fullName evidence="2">D-alanylalanine synthetase</fullName>
    </alternativeName>
</protein>
<dbReference type="EC" id="6.3.2.4" evidence="2"/>
<dbReference type="EMBL" id="CP000614">
    <property type="protein sequence ID" value="ABO53549.1"/>
    <property type="molecule type" value="Genomic_DNA"/>
</dbReference>
<dbReference type="SMR" id="A4JB96"/>
<dbReference type="KEGG" id="bvi:Bcep1808_0537"/>
<dbReference type="eggNOG" id="COG1181">
    <property type="taxonomic scope" value="Bacteria"/>
</dbReference>
<dbReference type="HOGENOM" id="CLU_039268_1_2_4"/>
<dbReference type="UniPathway" id="UPA00219"/>
<dbReference type="Proteomes" id="UP000002287">
    <property type="component" value="Chromosome 1"/>
</dbReference>
<dbReference type="GO" id="GO:0005829">
    <property type="term" value="C:cytosol"/>
    <property type="evidence" value="ECO:0007669"/>
    <property type="project" value="TreeGrafter"/>
</dbReference>
<dbReference type="GO" id="GO:0005524">
    <property type="term" value="F:ATP binding"/>
    <property type="evidence" value="ECO:0007669"/>
    <property type="project" value="UniProtKB-KW"/>
</dbReference>
<dbReference type="GO" id="GO:0008716">
    <property type="term" value="F:D-alanine-D-alanine ligase activity"/>
    <property type="evidence" value="ECO:0007669"/>
    <property type="project" value="UniProtKB-UniRule"/>
</dbReference>
<dbReference type="GO" id="GO:0046872">
    <property type="term" value="F:metal ion binding"/>
    <property type="evidence" value="ECO:0007669"/>
    <property type="project" value="UniProtKB-KW"/>
</dbReference>
<dbReference type="GO" id="GO:0071555">
    <property type="term" value="P:cell wall organization"/>
    <property type="evidence" value="ECO:0007669"/>
    <property type="project" value="UniProtKB-KW"/>
</dbReference>
<dbReference type="GO" id="GO:0009252">
    <property type="term" value="P:peptidoglycan biosynthetic process"/>
    <property type="evidence" value="ECO:0007669"/>
    <property type="project" value="UniProtKB-UniRule"/>
</dbReference>
<dbReference type="GO" id="GO:0008360">
    <property type="term" value="P:regulation of cell shape"/>
    <property type="evidence" value="ECO:0007669"/>
    <property type="project" value="UniProtKB-KW"/>
</dbReference>
<dbReference type="FunFam" id="3.30.1490.20:FF:000007">
    <property type="entry name" value="D-alanine--D-alanine ligase"/>
    <property type="match status" value="1"/>
</dbReference>
<dbReference type="FunFam" id="3.30.470.20:FF:000008">
    <property type="entry name" value="D-alanine--D-alanine ligase"/>
    <property type="match status" value="1"/>
</dbReference>
<dbReference type="FunFam" id="3.40.50.20:FF:000013">
    <property type="entry name" value="D-alanine--D-alanine ligase"/>
    <property type="match status" value="1"/>
</dbReference>
<dbReference type="Gene3D" id="3.40.50.20">
    <property type="match status" value="1"/>
</dbReference>
<dbReference type="Gene3D" id="3.30.1490.20">
    <property type="entry name" value="ATP-grasp fold, A domain"/>
    <property type="match status" value="1"/>
</dbReference>
<dbReference type="Gene3D" id="3.30.470.20">
    <property type="entry name" value="ATP-grasp fold, B domain"/>
    <property type="match status" value="1"/>
</dbReference>
<dbReference type="HAMAP" id="MF_00047">
    <property type="entry name" value="Dala_Dala_lig"/>
    <property type="match status" value="1"/>
</dbReference>
<dbReference type="InterPro" id="IPR011761">
    <property type="entry name" value="ATP-grasp"/>
</dbReference>
<dbReference type="InterPro" id="IPR013815">
    <property type="entry name" value="ATP_grasp_subdomain_1"/>
</dbReference>
<dbReference type="InterPro" id="IPR000291">
    <property type="entry name" value="D-Ala_lig_Van_CS"/>
</dbReference>
<dbReference type="InterPro" id="IPR005905">
    <property type="entry name" value="D_ala_D_ala"/>
</dbReference>
<dbReference type="InterPro" id="IPR011095">
    <property type="entry name" value="Dala_Dala_lig_C"/>
</dbReference>
<dbReference type="InterPro" id="IPR011127">
    <property type="entry name" value="Dala_Dala_lig_N"/>
</dbReference>
<dbReference type="InterPro" id="IPR016185">
    <property type="entry name" value="PreATP-grasp_dom_sf"/>
</dbReference>
<dbReference type="NCBIfam" id="TIGR01205">
    <property type="entry name" value="D_ala_D_alaTIGR"/>
    <property type="match status" value="1"/>
</dbReference>
<dbReference type="NCBIfam" id="NF002378">
    <property type="entry name" value="PRK01372.1"/>
    <property type="match status" value="1"/>
</dbReference>
<dbReference type="PANTHER" id="PTHR23132">
    <property type="entry name" value="D-ALANINE--D-ALANINE LIGASE"/>
    <property type="match status" value="1"/>
</dbReference>
<dbReference type="PANTHER" id="PTHR23132:SF23">
    <property type="entry name" value="D-ALANINE--D-ALANINE LIGASE B"/>
    <property type="match status" value="1"/>
</dbReference>
<dbReference type="Pfam" id="PF07478">
    <property type="entry name" value="Dala_Dala_lig_C"/>
    <property type="match status" value="1"/>
</dbReference>
<dbReference type="Pfam" id="PF01820">
    <property type="entry name" value="Dala_Dala_lig_N"/>
    <property type="match status" value="1"/>
</dbReference>
<dbReference type="PIRSF" id="PIRSF039102">
    <property type="entry name" value="Ddl/VanB"/>
    <property type="match status" value="1"/>
</dbReference>
<dbReference type="SUPFAM" id="SSF56059">
    <property type="entry name" value="Glutathione synthetase ATP-binding domain-like"/>
    <property type="match status" value="1"/>
</dbReference>
<dbReference type="SUPFAM" id="SSF52440">
    <property type="entry name" value="PreATP-grasp domain"/>
    <property type="match status" value="1"/>
</dbReference>
<dbReference type="PROSITE" id="PS50975">
    <property type="entry name" value="ATP_GRASP"/>
    <property type="match status" value="1"/>
</dbReference>
<dbReference type="PROSITE" id="PS00843">
    <property type="entry name" value="DALA_DALA_LIGASE_1"/>
    <property type="match status" value="1"/>
</dbReference>
<dbReference type="PROSITE" id="PS00844">
    <property type="entry name" value="DALA_DALA_LIGASE_2"/>
    <property type="match status" value="1"/>
</dbReference>
<accession>A4JB96</accession>
<gene>
    <name evidence="2" type="primary">ddl</name>
    <name type="ordered locus">Bcep1808_0537</name>
</gene>
<evidence type="ECO:0000250" key="1"/>
<evidence type="ECO:0000255" key="2">
    <source>
        <dbReference type="HAMAP-Rule" id="MF_00047"/>
    </source>
</evidence>